<protein>
    <recommendedName>
        <fullName evidence="1">Probable inorganic carbon transporter subunit DabA</fullName>
    </recommendedName>
</protein>
<evidence type="ECO:0000255" key="1">
    <source>
        <dbReference type="HAMAP-Rule" id="MF_01871"/>
    </source>
</evidence>
<accession>B2SLG0</accession>
<feature type="chain" id="PRO_0000387329" description="Probable inorganic carbon transporter subunit DabA">
    <location>
        <begin position="1"/>
        <end position="812"/>
    </location>
</feature>
<feature type="binding site" evidence="1">
    <location>
        <position position="337"/>
    </location>
    <ligand>
        <name>Zn(2+)</name>
        <dbReference type="ChEBI" id="CHEBI:29105"/>
    </ligand>
</feature>
<feature type="binding site" evidence="1">
    <location>
        <position position="339"/>
    </location>
    <ligand>
        <name>Zn(2+)</name>
        <dbReference type="ChEBI" id="CHEBI:29105"/>
    </ligand>
</feature>
<feature type="binding site" evidence="1">
    <location>
        <position position="499"/>
    </location>
    <ligand>
        <name>Zn(2+)</name>
        <dbReference type="ChEBI" id="CHEBI:29105"/>
    </ligand>
</feature>
<feature type="binding site" evidence="1">
    <location>
        <position position="514"/>
    </location>
    <ligand>
        <name>Zn(2+)</name>
        <dbReference type="ChEBI" id="CHEBI:29105"/>
    </ligand>
</feature>
<gene>
    <name evidence="1" type="primary">dabA</name>
    <name type="ordered locus">PXO_00907</name>
</gene>
<comment type="function">
    <text evidence="1">Part of an energy-coupled inorganic carbon pump.</text>
</comment>
<comment type="cofactor">
    <cofactor evidence="1">
        <name>Zn(2+)</name>
        <dbReference type="ChEBI" id="CHEBI:29105"/>
    </cofactor>
</comment>
<comment type="subunit">
    <text evidence="1">Forms a complex with DabB.</text>
</comment>
<comment type="subcellular location">
    <subcellularLocation>
        <location evidence="1">Cell inner membrane</location>
        <topology evidence="1">Peripheral membrane protein</topology>
    </subcellularLocation>
</comment>
<comment type="similarity">
    <text evidence="1">Belongs to the inorganic carbon transporter (TC 9.A.2) DabA family.</text>
</comment>
<dbReference type="EMBL" id="CP000967">
    <property type="protein sequence ID" value="ACD59022.1"/>
    <property type="molecule type" value="Genomic_DNA"/>
</dbReference>
<dbReference type="RefSeq" id="WP_011408453.1">
    <property type="nucleotide sequence ID" value="NC_010717.2"/>
</dbReference>
<dbReference type="KEGG" id="xop:PXO_00907"/>
<dbReference type="eggNOG" id="COG3002">
    <property type="taxonomic scope" value="Bacteria"/>
</dbReference>
<dbReference type="HOGENOM" id="CLU_009885_1_0_6"/>
<dbReference type="Proteomes" id="UP000001740">
    <property type="component" value="Chromosome"/>
</dbReference>
<dbReference type="GO" id="GO:0005886">
    <property type="term" value="C:plasma membrane"/>
    <property type="evidence" value="ECO:0007669"/>
    <property type="project" value="UniProtKB-SubCell"/>
</dbReference>
<dbReference type="GO" id="GO:0008270">
    <property type="term" value="F:zinc ion binding"/>
    <property type="evidence" value="ECO:0007669"/>
    <property type="project" value="UniProtKB-UniRule"/>
</dbReference>
<dbReference type="HAMAP" id="MF_01871">
    <property type="entry name" value="DabA"/>
    <property type="match status" value="1"/>
</dbReference>
<dbReference type="InterPro" id="IPR018752">
    <property type="entry name" value="DabA"/>
</dbReference>
<dbReference type="PANTHER" id="PTHR38344:SF1">
    <property type="entry name" value="INORGANIC CARBON TRANSPORTER SUBUNIT DABA-RELATED"/>
    <property type="match status" value="1"/>
</dbReference>
<dbReference type="PANTHER" id="PTHR38344">
    <property type="entry name" value="UPF0753 PROTEIN AQ_863"/>
    <property type="match status" value="1"/>
</dbReference>
<dbReference type="Pfam" id="PF10070">
    <property type="entry name" value="DabA"/>
    <property type="match status" value="1"/>
</dbReference>
<proteinExistence type="inferred from homology"/>
<organism>
    <name type="scientific">Xanthomonas oryzae pv. oryzae (strain PXO99A)</name>
    <dbReference type="NCBI Taxonomy" id="360094"/>
    <lineage>
        <taxon>Bacteria</taxon>
        <taxon>Pseudomonadati</taxon>
        <taxon>Pseudomonadota</taxon>
        <taxon>Gammaproteobacteria</taxon>
        <taxon>Lysobacterales</taxon>
        <taxon>Lysobacteraceae</taxon>
        <taxon>Xanthomonas</taxon>
    </lineage>
</organism>
<sequence length="812" mass="86889">MLMTTTTIAMSLSHDVIIAAAQRAARAIPPLWPLASSVAVNPFLGQASEPLEVAAARLRRASGIAVTMPRSWYAERLQSGEITEDDLQAAFQTAPAARRPPNVSALKHAIKVARPAPQAIPTVAELARDVTAIDWPGIVNERIGHWAAGYFDQGQALWAVGQSGGAYSTWRIIATHDLTPEIAGLAGFSQSVSDAPATAEDALVDCVARLGLSPDALDGYFHRLLTTLGGWGQVARYRLWQAELNGGTDACVTDLLAIRMLWEAALLHNGGSALVPGWQSAIAAYAAPVAASSDDVVDSILQEAAERAAQRKLNTVLAAPSSARLSRGRLTLQMAFCIDVRSEVFRRALESLDSGITTLGFAGFFGFGIGHRRFASDVVEARLPVLLSPGVVTCAGEPTPAANAAELSARITARAKRAWGRFKLAAISSFAFVEATGPIYIAKLLRDGLALARHHAPTDPAPRPAHELDLDTRLTMAARILKAMSFTSNFARLVVLAGHGAKVVNNPHASALHCGACGGYSGEVNARLLASLLNDHQVRAGLAERGIVIPADTLFLAALHDTTTDAVTLFADDHPSPTHAQDLAQVTQWLAAAGALARGERALRLPRANRSQDIAHRARDWAEIRPEWALAGCQAFIAAPRSRSAGRDLAGRAFLHDYDWRCDHGFGVLELILTAPVVVASWISLQYYGSTVAPERFGAGNKLLHNVTGGIGVVEGNGGILRTGLPWQSVHDGERLIHEPLRLSVLIEAPTEAIGAILERHPQLRALFDNRWLHLFALDDEGRMARRYIGDLSWETYVGDASSQSNRASTLA</sequence>
<name>DABA_XANOP</name>
<keyword id="KW-0997">Cell inner membrane</keyword>
<keyword id="KW-1003">Cell membrane</keyword>
<keyword id="KW-0472">Membrane</keyword>
<keyword id="KW-0479">Metal-binding</keyword>
<keyword id="KW-0813">Transport</keyword>
<keyword id="KW-0862">Zinc</keyword>
<reference key="1">
    <citation type="journal article" date="2008" name="BMC Genomics">
        <title>Genome sequence and rapid evolution of the rice pathogen Xanthomonas oryzae pv. oryzae PXO99A.</title>
        <authorList>
            <person name="Salzberg S.L."/>
            <person name="Sommer D.D."/>
            <person name="Schatz M.C."/>
            <person name="Phillippy A.M."/>
            <person name="Rabinowicz P.D."/>
            <person name="Tsuge S."/>
            <person name="Furutani A."/>
            <person name="Ochiai H."/>
            <person name="Delcher A.L."/>
            <person name="Kelley D."/>
            <person name="Madupu R."/>
            <person name="Puiu D."/>
            <person name="Radune D."/>
            <person name="Shumway M."/>
            <person name="Trapnell C."/>
            <person name="Aparna G."/>
            <person name="Jha G."/>
            <person name="Pandey A."/>
            <person name="Patil P.B."/>
            <person name="Ishihara H."/>
            <person name="Meyer D.F."/>
            <person name="Szurek B."/>
            <person name="Verdier V."/>
            <person name="Koebnik R."/>
            <person name="Dow J.M."/>
            <person name="Ryan R.P."/>
            <person name="Hirata H."/>
            <person name="Tsuyumu S."/>
            <person name="Won Lee S."/>
            <person name="Seo Y.-S."/>
            <person name="Sriariyanum M."/>
            <person name="Ronald P.C."/>
            <person name="Sonti R.V."/>
            <person name="Van Sluys M.-A."/>
            <person name="Leach J.E."/>
            <person name="White F.F."/>
            <person name="Bogdanove A.J."/>
        </authorList>
    </citation>
    <scope>NUCLEOTIDE SEQUENCE [LARGE SCALE GENOMIC DNA]</scope>
    <source>
        <strain>PXO99A</strain>
    </source>
</reference>